<accession>N4WW42</accession>
<accession>C3JXE9</accession>
<proteinExistence type="inferred from homology"/>
<organism>
    <name type="scientific">Cochliobolus heterostrophus (strain C4 / ATCC 48331 / race T)</name>
    <name type="common">Southern corn leaf blight fungus</name>
    <name type="synonym">Bipolaris maydis</name>
    <dbReference type="NCBI Taxonomy" id="665024"/>
    <lineage>
        <taxon>Eukaryota</taxon>
        <taxon>Fungi</taxon>
        <taxon>Dikarya</taxon>
        <taxon>Ascomycota</taxon>
        <taxon>Pezizomycotina</taxon>
        <taxon>Dothideomycetes</taxon>
        <taxon>Pleosporomycetidae</taxon>
        <taxon>Pleosporales</taxon>
        <taxon>Pleosporineae</taxon>
        <taxon>Pleosporaceae</taxon>
        <taxon>Bipolaris</taxon>
    </lineage>
</organism>
<keyword id="KW-0521">NADP</keyword>
<keyword id="KW-0560">Oxidoreductase</keyword>
<feature type="chain" id="PRO_0000437644" description="Dehydrogenase RED3">
    <location>
        <begin position="1"/>
        <end position="196"/>
    </location>
</feature>
<feature type="active site" description="Proton acceptor" evidence="3">
    <location>
        <position position="166"/>
    </location>
</feature>
<feature type="active site" description="Lowers pKa of active site Tyr" evidence="2">
    <location>
        <position position="170"/>
    </location>
</feature>
<feature type="binding site" evidence="1">
    <location>
        <position position="47"/>
    </location>
    <ligand>
        <name>NADP(+)</name>
        <dbReference type="ChEBI" id="CHEBI:58349"/>
    </ligand>
</feature>
<feature type="binding site" evidence="1">
    <location>
        <position position="74"/>
    </location>
    <ligand>
        <name>NADP(+)</name>
        <dbReference type="ChEBI" id="CHEBI:58349"/>
    </ligand>
</feature>
<feature type="binding site" evidence="2">
    <location>
        <position position="101"/>
    </location>
    <ligand>
        <name>NADP(+)</name>
        <dbReference type="ChEBI" id="CHEBI:58349"/>
    </ligand>
</feature>
<feature type="binding site" evidence="1">
    <location>
        <position position="134"/>
    </location>
    <ligand>
        <name>NADP(+)</name>
        <dbReference type="ChEBI" id="CHEBI:58349"/>
    </ligand>
</feature>
<feature type="binding site" evidence="2">
    <location>
        <position position="166"/>
    </location>
    <ligand>
        <name>NADP(+)</name>
        <dbReference type="ChEBI" id="CHEBI:58349"/>
    </ligand>
</feature>
<feature type="binding site" evidence="2">
    <location>
        <position position="170"/>
    </location>
    <ligand>
        <name>NADP(+)</name>
        <dbReference type="ChEBI" id="CHEBI:58349"/>
    </ligand>
</feature>
<comment type="function">
    <text evidence="4 5 6 7">Dehydrogenase; part of the Tox1B locus, one of the 2 loci that mediate the biosynthesis of T-toxin, a family of linear polyketides 37 to 45 carbons in length, of which the major component is 41 carbons, and which leads to high virulence to maize (PubMed:20192833, PubMed:8953776). One of the PKSs (PKS1 or PKS2) could synthesize a precursor, used subsequently by the other PKS as starter unit, to add additional carbons (PubMed:16529376). Variability in the length of the final carbon backbone C35-47 could be achieved by varying the number of condensation cycles, or use of different starter or extender units or might be due to decarboxylation of the penultimate product, catalyzed by DEC1 (PubMed:12236595). Additional proteins are required for the biosynthesis of T-toxin, including oxidoreductases RED1, RED2, RED3, LAM1 and OXI1, as well as esterase TOX9 (PubMed:20192833).</text>
</comment>
<comment type="catalytic activity">
    <reaction evidence="3">
        <text>a primary alcohol + NAD(+) = an aldehyde + NADH + H(+)</text>
        <dbReference type="Rhea" id="RHEA:10736"/>
        <dbReference type="ChEBI" id="CHEBI:15378"/>
        <dbReference type="ChEBI" id="CHEBI:15734"/>
        <dbReference type="ChEBI" id="CHEBI:17478"/>
        <dbReference type="ChEBI" id="CHEBI:57540"/>
        <dbReference type="ChEBI" id="CHEBI:57945"/>
        <dbReference type="EC" id="1.1.1.1"/>
    </reaction>
</comment>
<comment type="catalytic activity">
    <reaction evidence="3">
        <text>a secondary alcohol + NAD(+) = a ketone + NADH + H(+)</text>
        <dbReference type="Rhea" id="RHEA:10740"/>
        <dbReference type="ChEBI" id="CHEBI:15378"/>
        <dbReference type="ChEBI" id="CHEBI:17087"/>
        <dbReference type="ChEBI" id="CHEBI:35681"/>
        <dbReference type="ChEBI" id="CHEBI:57540"/>
        <dbReference type="ChEBI" id="CHEBI:57945"/>
        <dbReference type="EC" id="1.1.1.1"/>
    </reaction>
</comment>
<comment type="pathway">
    <text evidence="6">Mycotoxin biosynthesis.</text>
</comment>
<comment type="disruption phenotype">
    <text evidence="6">Significantly reduces the production of T-toxin and decreases the virulence to maize (PubMed:20192833).</text>
</comment>
<comment type="similarity">
    <text evidence="10">Belongs to the short-chain dehydrogenases/reductases (SDR) family.</text>
</comment>
<protein>
    <recommendedName>
        <fullName evidence="8">Dehydrogenase RED3</fullName>
        <ecNumber evidence="3">1.1.1.1</ecNumber>
    </recommendedName>
    <alternativeName>
        <fullName evidence="10">T-toxin biosynthesis protein RED3</fullName>
    </alternativeName>
</protein>
<gene>
    <name evidence="9" type="primary">RED3</name>
    <name type="ORF">COCC4DRAFT_155403</name>
</gene>
<sequence>MGLVKGNCGCYWGIKGHWSRNCSPVCEIANKNYYSRRGIAPRRTFWSVSNKSLVHLDANSLMIDYENVFYYTTDITSNKAIIESSERIRQDHGNPSVLINNAGVANGKTILEESEDERRRVFNVDILAHFSLVREFLPDMIKHNHGHIVTVASTASFLARPQLVSYSCCKTALIAFHEGLSQELRMRHNARKVRTT</sequence>
<reference key="1">
    <citation type="journal article" date="2010" name="Mol. Plant Microbe Interact.">
        <title>Six new genes required for production of T-toxin, a polyketide determinant of high virulence of Cochliobolus heterostrophus to maize.</title>
        <authorList>
            <person name="Inderbitzin P."/>
            <person name="Asvarak T."/>
            <person name="Turgeon B.G."/>
        </authorList>
    </citation>
    <scope>NUCLEOTIDE SEQUENCE [GENOMIC DNA]</scope>
    <scope>FUNCTION</scope>
    <scope>DISRUPTION PHENOTYPE</scope>
    <source>
        <strain>C4 / ATCC 48331 / race T</strain>
    </source>
</reference>
<reference key="2">
    <citation type="journal article" date="2012" name="PLoS Pathog.">
        <title>Diverse lifestyles and strategies of plant pathogenesis encoded in the genomes of eighteen Dothideomycetes fungi.</title>
        <authorList>
            <person name="Ohm R.A."/>
            <person name="Feau N."/>
            <person name="Henrissat B."/>
            <person name="Schoch C.L."/>
            <person name="Horwitz B.A."/>
            <person name="Barry K.W."/>
            <person name="Condon B.J."/>
            <person name="Copeland A.C."/>
            <person name="Dhillon B."/>
            <person name="Glaser F."/>
            <person name="Hesse C.N."/>
            <person name="Kosti I."/>
            <person name="LaButti K."/>
            <person name="Lindquist E.A."/>
            <person name="Lucas S."/>
            <person name="Salamov A.A."/>
            <person name="Bradshaw R.E."/>
            <person name="Ciuffetti L."/>
            <person name="Hamelin R.C."/>
            <person name="Kema G.H.J."/>
            <person name="Lawrence C."/>
            <person name="Scott J.A."/>
            <person name="Spatafora J.W."/>
            <person name="Turgeon B.G."/>
            <person name="de Wit P.J.G.M."/>
            <person name="Zhong S."/>
            <person name="Goodwin S.B."/>
            <person name="Grigoriev I.V."/>
        </authorList>
    </citation>
    <scope>NUCLEOTIDE SEQUENCE [LARGE SCALE GENOMIC DNA]</scope>
    <source>
        <strain>C4 / ATCC 48331 / race T</strain>
    </source>
</reference>
<reference key="3">
    <citation type="journal article" date="2013" name="PLoS Genet.">
        <title>Comparative genome structure, secondary metabolite, and effector coding capacity across Cochliobolus pathogens.</title>
        <authorList>
            <person name="Condon B.J."/>
            <person name="Leng Y."/>
            <person name="Wu D."/>
            <person name="Bushley K.E."/>
            <person name="Ohm R.A."/>
            <person name="Otillar R."/>
            <person name="Martin J."/>
            <person name="Schackwitz W."/>
            <person name="Grimwood J."/>
            <person name="MohdZainudin N."/>
            <person name="Xue C."/>
            <person name="Wang R."/>
            <person name="Manning V.A."/>
            <person name="Dhillon B."/>
            <person name="Tu Z.J."/>
            <person name="Steffenson B.J."/>
            <person name="Salamov A."/>
            <person name="Sun H."/>
            <person name="Lowry S."/>
            <person name="LaButti K."/>
            <person name="Han J."/>
            <person name="Copeland A."/>
            <person name="Lindquist E."/>
            <person name="Barry K."/>
            <person name="Schmutz J."/>
            <person name="Baker S.E."/>
            <person name="Ciuffetti L.M."/>
            <person name="Grigoriev I.V."/>
            <person name="Zhong S."/>
            <person name="Turgeon B.G."/>
        </authorList>
    </citation>
    <scope>NUCLEOTIDE SEQUENCE [LARGE SCALE GENOMIC DNA]</scope>
    <source>
        <strain>C4 / ATCC 48331 / race T</strain>
    </source>
</reference>
<reference key="4">
    <citation type="journal article" date="1996" name="Plant Cell">
        <title>A polyketide synthase is required for fungal virulence and production of the polyketide T-toxin.</title>
        <authorList>
            <person name="Yang G."/>
            <person name="Rose M.S."/>
            <person name="Turgeon B.G."/>
            <person name="Yoder O.C."/>
        </authorList>
    </citation>
    <scope>FUNCTION</scope>
    <source>
        <strain>C4 / ATCC 48331 / race T</strain>
    </source>
</reference>
<reference key="5">
    <citation type="journal article" date="2002" name="Mol. Plant Microbe Interact.">
        <title>A decarboxylase encoded at the Cochliobolus heterostrophus translocation-associated Tox1B locus is required for polyketide (T-toxin) biosynthesis and high virulence on T-cytoplasm maize.</title>
        <authorList>
            <person name="Rose M.S."/>
            <person name="Yun S.-H."/>
            <person name="Asvarak T."/>
            <person name="Lu S.-W."/>
            <person name="Yoder O.C."/>
            <person name="Turgeon B.G."/>
        </authorList>
    </citation>
    <scope>FUNCTION</scope>
    <source>
        <strain>C4 / ATCC 48331 / race T</strain>
    </source>
</reference>
<reference key="6">
    <citation type="journal article" date="2006" name="Mol. Plant Microbe Interact.">
        <title>Two polyketide synthase-encoding genes are required for biosynthesis of the polyketide virulence factor, T-toxin, by Cochliobolus heterostrophus.</title>
        <authorList>
            <person name="Baker S.E."/>
            <person name="Kroken S."/>
            <person name="Inderbitzin P."/>
            <person name="Asvarak T."/>
            <person name="Li B.Y."/>
            <person name="Shi L."/>
            <person name="Yoder O.C."/>
            <person name="Turgeon B.G."/>
        </authorList>
    </citation>
    <scope>FUNCTION</scope>
</reference>
<evidence type="ECO:0000250" key="1">
    <source>
        <dbReference type="UniProtKB" id="L0E2Z4"/>
    </source>
</evidence>
<evidence type="ECO:0000250" key="2">
    <source>
        <dbReference type="UniProtKB" id="O93868"/>
    </source>
</evidence>
<evidence type="ECO:0000255" key="3">
    <source>
        <dbReference type="PROSITE-ProRule" id="PRU10001"/>
    </source>
</evidence>
<evidence type="ECO:0000269" key="4">
    <source>
    </source>
</evidence>
<evidence type="ECO:0000269" key="5">
    <source>
    </source>
</evidence>
<evidence type="ECO:0000269" key="6">
    <source>
    </source>
</evidence>
<evidence type="ECO:0000269" key="7">
    <source>
    </source>
</evidence>
<evidence type="ECO:0000303" key="8">
    <source>
    </source>
</evidence>
<evidence type="ECO:0000303" key="9">
    <source>
    </source>
</evidence>
<evidence type="ECO:0000305" key="10"/>
<name>RED3_COCH4</name>
<dbReference type="EC" id="1.1.1.1" evidence="3"/>
<dbReference type="EMBL" id="AF525909">
    <property type="protein sequence ID" value="ACP34153.1"/>
    <property type="molecule type" value="Genomic_DNA"/>
</dbReference>
<dbReference type="EMBL" id="KB733525">
    <property type="protein sequence ID" value="ENH98580.1"/>
    <property type="molecule type" value="Genomic_DNA"/>
</dbReference>
<dbReference type="RefSeq" id="XP_014072490.1">
    <property type="nucleotide sequence ID" value="XM_014217015.1"/>
</dbReference>
<dbReference type="SMR" id="N4WW42"/>
<dbReference type="GeneID" id="25839374"/>
<dbReference type="HOGENOM" id="CLU_1390094_0_0_1"/>
<dbReference type="OrthoDB" id="10253736at2759"/>
<dbReference type="PHI-base" id="PHI:2836"/>
<dbReference type="Proteomes" id="UP000012338">
    <property type="component" value="Unassembled WGS sequence"/>
</dbReference>
<dbReference type="GO" id="GO:0004022">
    <property type="term" value="F:alcohol dehydrogenase (NAD+) activity"/>
    <property type="evidence" value="ECO:0007669"/>
    <property type="project" value="UniProtKB-EC"/>
</dbReference>
<dbReference type="Gene3D" id="3.40.50.720">
    <property type="entry name" value="NAD(P)-binding Rossmann-like Domain"/>
    <property type="match status" value="1"/>
</dbReference>
<dbReference type="InterPro" id="IPR036291">
    <property type="entry name" value="NAD(P)-bd_dom_sf"/>
</dbReference>
<dbReference type="InterPro" id="IPR020904">
    <property type="entry name" value="Sc_DH/Rdtase_CS"/>
</dbReference>
<dbReference type="InterPro" id="IPR002347">
    <property type="entry name" value="SDR_fam"/>
</dbReference>
<dbReference type="PANTHER" id="PTHR24322">
    <property type="entry name" value="PKSB"/>
    <property type="match status" value="1"/>
</dbReference>
<dbReference type="PANTHER" id="PTHR24322:SF736">
    <property type="entry name" value="RETINOL DEHYDROGENASE 10"/>
    <property type="match status" value="1"/>
</dbReference>
<dbReference type="Pfam" id="PF00106">
    <property type="entry name" value="adh_short"/>
    <property type="match status" value="1"/>
</dbReference>
<dbReference type="PRINTS" id="PR00081">
    <property type="entry name" value="GDHRDH"/>
</dbReference>
<dbReference type="PRINTS" id="PR00080">
    <property type="entry name" value="SDRFAMILY"/>
</dbReference>
<dbReference type="SUPFAM" id="SSF51735">
    <property type="entry name" value="NAD(P)-binding Rossmann-fold domains"/>
    <property type="match status" value="1"/>
</dbReference>
<dbReference type="PROSITE" id="PS00061">
    <property type="entry name" value="ADH_SHORT"/>
    <property type="match status" value="1"/>
</dbReference>